<reference key="1">
    <citation type="journal article" date="1994" name="Virology">
        <title>Canine oral papillomavirus genomic sequence: a unique 1.5-kb intervening sequence between the E2 and L2 open reading frames.</title>
        <authorList>
            <person name="Delius H."/>
            <person name="van Ranst M.A."/>
            <person name="Jenson A.B."/>
            <person name="zur Hausen H."/>
            <person name="Sundberg J.P."/>
        </authorList>
    </citation>
    <scope>NUCLEOTIDE SEQUENCE [GENOMIC DNA]</scope>
</reference>
<reference key="2">
    <citation type="journal article" date="1995" name="Int. J. Oncol.">
        <title>Nucleotide sequence of a canine oral papillomavirus containing a long noncoding region.</title>
        <authorList>
            <person name="Isegawa N."/>
            <person name="Ohta M."/>
            <person name="Shirasawa H."/>
            <person name="Tokita H."/>
            <person name="Simizu B."/>
            <person name="Yamaura A."/>
        </authorList>
    </citation>
    <scope>NUCLEOTIDE SEQUENCE [GENOMIC DNA]</scope>
</reference>
<evidence type="ECO:0000255" key="1">
    <source>
        <dbReference type="HAMAP-Rule" id="MF_04004"/>
    </source>
</evidence>
<protein>
    <recommendedName>
        <fullName evidence="1">Protein E7</fullName>
    </recommendedName>
</protein>
<keyword id="KW-0010">Activator</keyword>
<keyword id="KW-0238">DNA-binding</keyword>
<keyword id="KW-0244">Early protein</keyword>
<keyword id="KW-1078">G1/S host cell cycle checkpoint dysregulation by virus</keyword>
<keyword id="KW-1035">Host cytoplasm</keyword>
<keyword id="KW-1048">Host nucleus</keyword>
<keyword id="KW-0945">Host-virus interaction</keyword>
<keyword id="KW-1090">Inhibition of host innate immune response by virus</keyword>
<keyword id="KW-1114">Inhibition of host interferon signaling pathway by virus</keyword>
<keyword id="KW-0922">Interferon antiviral system evasion</keyword>
<keyword id="KW-0479">Metal-binding</keyword>
<keyword id="KW-1121">Modulation of host cell cycle by virus</keyword>
<keyword id="KW-0553">Oncogene</keyword>
<keyword id="KW-1185">Reference proteome</keyword>
<keyword id="KW-0804">Transcription</keyword>
<keyword id="KW-0805">Transcription regulation</keyword>
<keyword id="KW-0899">Viral immunoevasion</keyword>
<keyword id="KW-0862">Zinc</keyword>
<keyword id="KW-0863">Zinc-finger</keyword>
<sequence>MIGQCATLLDIVLTEQPEPIDLQCYEQLPSSDEEEEEEEPTEKNVYRIEAACGFCGKGVRFFCLSQKEDLRVLQVTLLSLSLVCTTCVQTAKLDHGG</sequence>
<proteinExistence type="inferred from homology"/>
<gene>
    <name evidence="1" type="primary">E7</name>
</gene>
<name>VE7_COPV6</name>
<organismHost>
    <name type="scientific">Canis lupus familiaris</name>
    <name type="common">Dog</name>
    <name type="synonym">Canis familiaris</name>
    <dbReference type="NCBI Taxonomy" id="9615"/>
</organismHost>
<comment type="function">
    <text evidence="1">Plays a role in viral genome replication by driving entry of quiescent cells into the cell cycle. Stimulation of progression from G1 to S phase allows the virus to efficiently use the cellular DNA replicating machinery to achieve viral genome replication. E7 protein has both transforming and trans-activating activities. Induces the disassembly of the E2F1 transcription factor from RB1, with subsequent transcriptional activation of E2F1-regulated S-phase genes. Interferes with host histone deacetylation mediated by HDAC1 and HDAC2, leading to transcription activation. Also plays a role in the inhibition of both antiviral and antiproliferative functions of host interferon alpha. Interaction with host TMEM173/STING impairs the ability of TMEM173/STING to sense cytosolic DNA and promote the production of type I interferon (IFN-alpha and IFN-beta).</text>
</comment>
<comment type="subunit">
    <text evidence="1">Homodimer. Homooligomer. Interacts with host RB1; this interaction induces dissociation of RB1-E2F1 complex thereby disrupting RB1 activity. Interacts with host EP300; this interaction represses EP300 transcriptional activity. Interacts with protein E2; this interaction inhibits E7 oncogenic activity. Interacts with host TMEM173/STING; this interaction impairs the ability of TMEM173/STING to sense cytosolic DNA and promote the production of type I interferon (IFN-alpha and IFN-beta).</text>
</comment>
<comment type="subcellular location">
    <subcellularLocation>
        <location evidence="1">Host cytoplasm</location>
    </subcellularLocation>
    <subcellularLocation>
        <location evidence="1">Host nucleus</location>
    </subcellularLocation>
    <text evidence="1">Predominantly found in the host nucleus.</text>
</comment>
<comment type="domain">
    <text evidence="1">The E7 terminal domain is an intrinsically disordered domain, whose flexibility and conformational transitions confer target adaptability to the oncoprotein. It allows adaptation to a variety of protein targets and exposes the PEST degradation sequence that regulates its turnover in the cell.</text>
</comment>
<comment type="PTM">
    <text evidence="1">Highly phosphorylated.</text>
</comment>
<comment type="similarity">
    <text evidence="1">Belongs to the papillomaviridae E7 protein family.</text>
</comment>
<accession>Q89759</accession>
<organism>
    <name type="scientific">Canine oral papillomavirus (strain Y62)</name>
    <name type="common">COPV</name>
    <dbReference type="NCBI Taxonomy" id="766192"/>
    <lineage>
        <taxon>Viruses</taxon>
        <taxon>Monodnaviria</taxon>
        <taxon>Shotokuvirae</taxon>
        <taxon>Cossaviricota</taxon>
        <taxon>Papovaviricetes</taxon>
        <taxon>Zurhausenvirales</taxon>
        <taxon>Papillomaviridae</taxon>
        <taxon>Firstpapillomavirinae</taxon>
        <taxon>Lambdapapillomavirus</taxon>
        <taxon>Canine oral papillomavirus</taxon>
    </lineage>
</organism>
<dbReference type="EMBL" id="D55633">
    <property type="protein sequence ID" value="BAA09499.1"/>
    <property type="molecule type" value="Genomic_DNA"/>
</dbReference>
<dbReference type="EMBL" id="L22695">
    <property type="protein sequence ID" value="AAA61745.1"/>
    <property type="molecule type" value="Genomic_DNA"/>
</dbReference>
<dbReference type="RefSeq" id="NP_056814.1">
    <property type="nucleotide sequence ID" value="NC_001619.1"/>
</dbReference>
<dbReference type="SMR" id="Q89759"/>
<dbReference type="GeneID" id="1497244"/>
<dbReference type="KEGG" id="vg:1497244"/>
<dbReference type="Proteomes" id="UP000008788">
    <property type="component" value="Segment"/>
</dbReference>
<dbReference type="Proteomes" id="UP000097271">
    <property type="component" value="Genome"/>
</dbReference>
<dbReference type="GO" id="GO:0030430">
    <property type="term" value="C:host cell cytoplasm"/>
    <property type="evidence" value="ECO:0007669"/>
    <property type="project" value="UniProtKB-SubCell"/>
</dbReference>
<dbReference type="GO" id="GO:0042025">
    <property type="term" value="C:host cell nucleus"/>
    <property type="evidence" value="ECO:0007669"/>
    <property type="project" value="UniProtKB-SubCell"/>
</dbReference>
<dbReference type="GO" id="GO:0003677">
    <property type="term" value="F:DNA binding"/>
    <property type="evidence" value="ECO:0007669"/>
    <property type="project" value="UniProtKB-UniRule"/>
</dbReference>
<dbReference type="GO" id="GO:0003700">
    <property type="term" value="F:DNA-binding transcription factor activity"/>
    <property type="evidence" value="ECO:0007669"/>
    <property type="project" value="UniProtKB-UniRule"/>
</dbReference>
<dbReference type="GO" id="GO:0019904">
    <property type="term" value="F:protein domain specific binding"/>
    <property type="evidence" value="ECO:0007669"/>
    <property type="project" value="UniProtKB-UniRule"/>
</dbReference>
<dbReference type="GO" id="GO:0008270">
    <property type="term" value="F:zinc ion binding"/>
    <property type="evidence" value="ECO:0007669"/>
    <property type="project" value="UniProtKB-KW"/>
</dbReference>
<dbReference type="GO" id="GO:0006351">
    <property type="term" value="P:DNA-templated transcription"/>
    <property type="evidence" value="ECO:0007669"/>
    <property type="project" value="UniProtKB-UniRule"/>
</dbReference>
<dbReference type="GO" id="GO:0039645">
    <property type="term" value="P:symbiont-mediated perturbation of host cell cycle G1/S transition checkpoint"/>
    <property type="evidence" value="ECO:0007669"/>
    <property type="project" value="UniProtKB-UniRule"/>
</dbReference>
<dbReference type="GO" id="GO:0052170">
    <property type="term" value="P:symbiont-mediated suppression of host innate immune response"/>
    <property type="evidence" value="ECO:0007669"/>
    <property type="project" value="UniProtKB-KW"/>
</dbReference>
<dbReference type="GO" id="GO:0039502">
    <property type="term" value="P:symbiont-mediated suppression of host type I interferon-mediated signaling pathway"/>
    <property type="evidence" value="ECO:0007669"/>
    <property type="project" value="UniProtKB-UniRule"/>
</dbReference>
<dbReference type="Gene3D" id="3.30.160.330">
    <property type="match status" value="1"/>
</dbReference>
<dbReference type="HAMAP" id="MF_04004">
    <property type="entry name" value="PPV_E7"/>
    <property type="match status" value="1"/>
</dbReference>
<dbReference type="InterPro" id="IPR000148">
    <property type="entry name" value="Papilloma_E7"/>
</dbReference>
<dbReference type="Pfam" id="PF00527">
    <property type="entry name" value="E7"/>
    <property type="match status" value="1"/>
</dbReference>
<dbReference type="PIRSF" id="PIRSF003407">
    <property type="entry name" value="Papvi_E7"/>
    <property type="match status" value="1"/>
</dbReference>
<dbReference type="SUPFAM" id="SSF161234">
    <property type="entry name" value="E7 C-terminal domain-like"/>
    <property type="match status" value="1"/>
</dbReference>
<feature type="chain" id="PRO_0000133465" description="Protein E7">
    <location>
        <begin position="1"/>
        <end position="97"/>
    </location>
</feature>
<feature type="zinc finger region" evidence="1">
    <location>
        <begin position="52"/>
        <end position="87"/>
    </location>
</feature>
<feature type="region of interest" description="E7 terminal domain" evidence="1">
    <location>
        <begin position="1"/>
        <end position="39"/>
    </location>
</feature>
<feature type="short sequence motif" description="LXCXE motif; interaction with host RB1 and TMEM173/STING" evidence="1">
    <location>
        <begin position="22"/>
        <end position="26"/>
    </location>
</feature>
<feature type="short sequence motif" description="Nuclear export signal" evidence="1">
    <location>
        <begin position="70"/>
        <end position="78"/>
    </location>
</feature>